<proteinExistence type="evidence at protein level"/>
<protein>
    <recommendedName>
        <fullName>Keratin, type I cytoskeletal 13</fullName>
    </recommendedName>
    <alternativeName>
        <fullName>Cytokeratin-13</fullName>
        <shortName>CK-13</shortName>
    </alternativeName>
    <alternativeName>
        <fullName>Keratin-13</fullName>
        <shortName>K13</shortName>
    </alternativeName>
</protein>
<evidence type="ECO:0000250" key="1">
    <source>
        <dbReference type="UniProtKB" id="P08730"/>
    </source>
</evidence>
<evidence type="ECO:0000255" key="2"/>
<evidence type="ECO:0000255" key="3">
    <source>
        <dbReference type="PROSITE-ProRule" id="PRU01188"/>
    </source>
</evidence>
<evidence type="ECO:0000256" key="4">
    <source>
        <dbReference type="SAM" id="MobiDB-lite"/>
    </source>
</evidence>
<evidence type="ECO:0000269" key="5">
    <source>
    </source>
</evidence>
<evidence type="ECO:0000305" key="6"/>
<evidence type="ECO:0000312" key="7">
    <source>
        <dbReference type="EMBL" id="CAH05043.1"/>
    </source>
</evidence>
<comment type="function">
    <text evidence="1 6">Type 1 keratin (Probable). May maintain oral mucosal cell homeostasis and tissue organization in response to mechanical stress (By similarity).</text>
</comment>
<comment type="subunit">
    <text evidence="6">Heterotetramer of two type I and two type II keratins.</text>
</comment>
<comment type="tissue specificity">
    <text evidence="5">Expressed in skin.</text>
</comment>
<comment type="miscellaneous">
    <text>There are two types of cytoskeletal and microfibrillar keratin: I (acidic; 40-55 kDa) and II (neutral to basic; 56-70 kDa).</text>
</comment>
<comment type="similarity">
    <text evidence="3">Belongs to the intermediate filament family.</text>
</comment>
<sequence>MNFTSFSITQGSRPQPPSTRGFSGNSFKSDLIPQSRRSHSVYGTPGSIRISSPSVPSAIVSSYSSTLSSALPSSSYGGNSFSSSTSFSSGGSDLLLGTSGKEAMQNLNDRLASYLEKVRSLEERNRELEQKIREWYEKQGAGTKTKDFSHYFKIIADLQKQIHDGNMENAKILLRIDNAKLAADDFKQKWEAEQVMRLNVEGDINGLRRILDEMTLARADLEMQIDGQKEELAYLNKSHDEEMKALRSQLGGQVNVEVDAAPAEDLTKKLERMRQQYEQLAEKNRKDAEDWFMKASEDLNKNVASSTEAIQTTKTEINELKRTIQGLQIELQSQLSMKDALEGQLADTEHRYSSILMNLQNIIHQKEAELSDIRADTERQANEYKILFDAKTKLENEIRTYRILLEGDEGKFQTSPHHPSIVTKQTETVVTPVVITNVKTVVEEIIDGKIVSKKEYPGPPEKLMI</sequence>
<dbReference type="EMBL" id="AJ785787">
    <property type="protein sequence ID" value="CAH05043.1"/>
    <property type="molecule type" value="mRNA"/>
</dbReference>
<dbReference type="SMR" id="Q5K2P4"/>
<dbReference type="GO" id="GO:0005882">
    <property type="term" value="C:intermediate filament"/>
    <property type="evidence" value="ECO:0007669"/>
    <property type="project" value="UniProtKB-KW"/>
</dbReference>
<dbReference type="GO" id="GO:0005198">
    <property type="term" value="F:structural molecule activity"/>
    <property type="evidence" value="ECO:0007669"/>
    <property type="project" value="InterPro"/>
</dbReference>
<dbReference type="FunFam" id="1.20.5.1160:FF:000002">
    <property type="entry name" value="Type I keratin 10"/>
    <property type="match status" value="1"/>
</dbReference>
<dbReference type="FunFam" id="1.20.5.170:FF:000002">
    <property type="entry name" value="Type I keratin KA11"/>
    <property type="match status" value="1"/>
</dbReference>
<dbReference type="FunFam" id="1.20.5.500:FF:000001">
    <property type="entry name" value="Type II keratin 23"/>
    <property type="match status" value="1"/>
</dbReference>
<dbReference type="Gene3D" id="1.20.5.170">
    <property type="match status" value="1"/>
</dbReference>
<dbReference type="Gene3D" id="1.20.5.500">
    <property type="entry name" value="Single helix bin"/>
    <property type="match status" value="1"/>
</dbReference>
<dbReference type="Gene3D" id="1.20.5.1160">
    <property type="entry name" value="Vasodilator-stimulated phosphoprotein"/>
    <property type="match status" value="1"/>
</dbReference>
<dbReference type="InterPro" id="IPR018039">
    <property type="entry name" value="IF_conserved"/>
</dbReference>
<dbReference type="InterPro" id="IPR039008">
    <property type="entry name" value="IF_rod_dom"/>
</dbReference>
<dbReference type="InterPro" id="IPR002957">
    <property type="entry name" value="Keratin_I"/>
</dbReference>
<dbReference type="PANTHER" id="PTHR23239">
    <property type="entry name" value="INTERMEDIATE FILAMENT"/>
    <property type="match status" value="1"/>
</dbReference>
<dbReference type="PANTHER" id="PTHR23239:SF180">
    <property type="entry name" value="KERATIN, TYPE I CYTOSKELETAL 17"/>
    <property type="match status" value="1"/>
</dbReference>
<dbReference type="Pfam" id="PF00038">
    <property type="entry name" value="Filament"/>
    <property type="match status" value="1"/>
</dbReference>
<dbReference type="PRINTS" id="PR01248">
    <property type="entry name" value="TYPE1KERATIN"/>
</dbReference>
<dbReference type="SMART" id="SM01391">
    <property type="entry name" value="Filament"/>
    <property type="match status" value="1"/>
</dbReference>
<dbReference type="SUPFAM" id="SSF64593">
    <property type="entry name" value="Intermediate filament protein, coiled coil region"/>
    <property type="match status" value="2"/>
</dbReference>
<dbReference type="PROSITE" id="PS00226">
    <property type="entry name" value="IF_ROD_1"/>
    <property type="match status" value="1"/>
</dbReference>
<dbReference type="PROSITE" id="PS51842">
    <property type="entry name" value="IF_ROD_2"/>
    <property type="match status" value="1"/>
</dbReference>
<gene>
    <name type="primary">KRT13</name>
</gene>
<organism>
    <name type="scientific">Protopterus aethiopicus</name>
    <name type="common">Marbled lungfish</name>
    <dbReference type="NCBI Taxonomy" id="7886"/>
    <lineage>
        <taxon>Eukaryota</taxon>
        <taxon>Metazoa</taxon>
        <taxon>Chordata</taxon>
        <taxon>Craniata</taxon>
        <taxon>Vertebrata</taxon>
        <taxon>Euteleostomi</taxon>
        <taxon>Dipnomorpha</taxon>
        <taxon>Ceratodontiformes</taxon>
        <taxon>Lepidosirenoidei</taxon>
        <taxon>Protopteridae</taxon>
        <taxon>Protopterus</taxon>
    </lineage>
</organism>
<reference evidence="6 7" key="1">
    <citation type="journal article" date="2005" name="Eur. J. Cell Biol.">
        <title>Evolution of tissue-specific keratins as deduced from novel cDNA sequences of the lungfish Protopterus aethiopicus.</title>
        <authorList>
            <person name="Schaffeld M."/>
            <person name="Bremer M."/>
            <person name="Hunzinger C."/>
            <person name="Markl J."/>
        </authorList>
    </citation>
    <scope>NUCLEOTIDE SEQUENCE [MRNA]</scope>
    <scope>TISSUE SPECIFICITY</scope>
    <scope>IDENTIFICATION BY MASS SPECTROMETRY</scope>
    <source>
        <tissue evidence="5">Skin</tissue>
    </source>
</reference>
<accession>Q5K2P4</accession>
<name>K1C13_PROAT</name>
<feature type="chain" id="PRO_0000063651" description="Keratin, type I cytoskeletal 13">
    <location>
        <begin position="1"/>
        <end position="465"/>
    </location>
</feature>
<feature type="domain" description="IF rod" evidence="3">
    <location>
        <begin position="100"/>
        <end position="412"/>
    </location>
</feature>
<feature type="region of interest" description="Head" evidence="2">
    <location>
        <begin position="1"/>
        <end position="98"/>
    </location>
</feature>
<feature type="region of interest" description="Disordered" evidence="4">
    <location>
        <begin position="1"/>
        <end position="47"/>
    </location>
</feature>
<feature type="region of interest" description="Coil 1A" evidence="2">
    <location>
        <begin position="99"/>
        <end position="135"/>
    </location>
</feature>
<feature type="region of interest" description="Linker 1" evidence="2">
    <location>
        <begin position="136"/>
        <end position="154"/>
    </location>
</feature>
<feature type="region of interest" description="Coil 1B" evidence="2">
    <location>
        <begin position="155"/>
        <end position="246"/>
    </location>
</feature>
<feature type="region of interest" description="Linker 12" evidence="2">
    <location>
        <begin position="247"/>
        <end position="269"/>
    </location>
</feature>
<feature type="region of interest" description="Coil 2" evidence="2">
    <location>
        <begin position="270"/>
        <end position="408"/>
    </location>
</feature>
<feature type="region of interest" description="Tail" evidence="2">
    <location>
        <begin position="409"/>
        <end position="465"/>
    </location>
</feature>
<feature type="compositionally biased region" description="Polar residues" evidence="4">
    <location>
        <begin position="1"/>
        <end position="28"/>
    </location>
</feature>
<keyword id="KW-0175">Coiled coil</keyword>
<keyword id="KW-0403">Intermediate filament</keyword>
<keyword id="KW-0416">Keratin</keyword>